<evidence type="ECO:0000250" key="1"/>
<evidence type="ECO:0000255" key="2">
    <source>
        <dbReference type="PROSITE-ProRule" id="PRU00145"/>
    </source>
</evidence>
<evidence type="ECO:0000255" key="3">
    <source>
        <dbReference type="PROSITE-ProRule" id="PRU00192"/>
    </source>
</evidence>
<evidence type="ECO:0000256" key="4">
    <source>
        <dbReference type="SAM" id="MobiDB-lite"/>
    </source>
</evidence>
<evidence type="ECO:0000305" key="5"/>
<proteinExistence type="evidence at transcript level"/>
<name>SKA2A_XENLA</name>
<reference key="1">
    <citation type="submission" date="2004-10" db="EMBL/GenBank/DDBJ databases">
        <authorList>
            <consortium name="NIH - Xenopus Gene Collection (XGC) project"/>
        </authorList>
    </citation>
    <scope>NUCLEOTIDE SEQUENCE [LARGE SCALE MRNA]</scope>
</reference>
<dbReference type="EMBL" id="BC084386">
    <property type="protein sequence ID" value="AAH84386.1"/>
    <property type="molecule type" value="mRNA"/>
</dbReference>
<dbReference type="RefSeq" id="NP_001088334.1">
    <property type="nucleotide sequence ID" value="NM_001094865.2"/>
</dbReference>
<dbReference type="SMR" id="Q5XGP7"/>
<dbReference type="GeneID" id="495172"/>
<dbReference type="KEGG" id="xla:495172"/>
<dbReference type="AGR" id="Xenbase:XB-GENE-866147"/>
<dbReference type="CTD" id="495172"/>
<dbReference type="Xenbase" id="XB-GENE-866147">
    <property type="gene designation" value="skap2.S"/>
</dbReference>
<dbReference type="OMA" id="ASDRCDK"/>
<dbReference type="OrthoDB" id="243840at2759"/>
<dbReference type="Proteomes" id="UP000186698">
    <property type="component" value="Chromosome 6S"/>
</dbReference>
<dbReference type="Bgee" id="495172">
    <property type="expression patterns" value="Expressed in spleen and 15 other cell types or tissues"/>
</dbReference>
<dbReference type="GO" id="GO:0005737">
    <property type="term" value="C:cytoplasm"/>
    <property type="evidence" value="ECO:0000318"/>
    <property type="project" value="GO_Central"/>
</dbReference>
<dbReference type="GO" id="GO:0005886">
    <property type="term" value="C:plasma membrane"/>
    <property type="evidence" value="ECO:0000318"/>
    <property type="project" value="GO_Central"/>
</dbReference>
<dbReference type="GO" id="GO:0042113">
    <property type="term" value="P:B cell activation"/>
    <property type="evidence" value="ECO:0007669"/>
    <property type="project" value="UniProtKB-KW"/>
</dbReference>
<dbReference type="CDD" id="cd13381">
    <property type="entry name" value="PH_Skap-hom_Skap2"/>
    <property type="match status" value="1"/>
</dbReference>
<dbReference type="CDD" id="cd12045">
    <property type="entry name" value="SH3_SKAP2"/>
    <property type="match status" value="1"/>
</dbReference>
<dbReference type="FunFam" id="2.30.30.40:FF:000097">
    <property type="entry name" value="Putative src kinase-associated phosphoprotein 2"/>
    <property type="match status" value="1"/>
</dbReference>
<dbReference type="Gene3D" id="6.10.250.220">
    <property type="match status" value="1"/>
</dbReference>
<dbReference type="Gene3D" id="2.30.29.30">
    <property type="entry name" value="Pleckstrin-homology domain (PH domain)/Phosphotyrosine-binding domain (PTB)"/>
    <property type="match status" value="1"/>
</dbReference>
<dbReference type="Gene3D" id="2.30.30.40">
    <property type="entry name" value="SH3 Domains"/>
    <property type="match status" value="1"/>
</dbReference>
<dbReference type="InterPro" id="IPR011993">
    <property type="entry name" value="PH-like_dom_sf"/>
</dbReference>
<dbReference type="InterPro" id="IPR001849">
    <property type="entry name" value="PH_domain"/>
</dbReference>
<dbReference type="InterPro" id="IPR036028">
    <property type="entry name" value="SH3-like_dom_sf"/>
</dbReference>
<dbReference type="InterPro" id="IPR001452">
    <property type="entry name" value="SH3_domain"/>
</dbReference>
<dbReference type="InterPro" id="IPR037781">
    <property type="entry name" value="SKAP_fam"/>
</dbReference>
<dbReference type="PANTHER" id="PTHR15129:SF2">
    <property type="entry name" value="SRC KINASE-ASSOCIATED PHOSPHOPROTEIN 2"/>
    <property type="match status" value="1"/>
</dbReference>
<dbReference type="PANTHER" id="PTHR15129">
    <property type="entry name" value="SRC-ASSOCIATED ADAPTOR PROTEIN"/>
    <property type="match status" value="1"/>
</dbReference>
<dbReference type="Pfam" id="PF00169">
    <property type="entry name" value="PH"/>
    <property type="match status" value="1"/>
</dbReference>
<dbReference type="Pfam" id="PF00018">
    <property type="entry name" value="SH3_1"/>
    <property type="match status" value="1"/>
</dbReference>
<dbReference type="PRINTS" id="PR00452">
    <property type="entry name" value="SH3DOMAIN"/>
</dbReference>
<dbReference type="SMART" id="SM00233">
    <property type="entry name" value="PH"/>
    <property type="match status" value="1"/>
</dbReference>
<dbReference type="SMART" id="SM00326">
    <property type="entry name" value="SH3"/>
    <property type="match status" value="1"/>
</dbReference>
<dbReference type="SUPFAM" id="SSF50729">
    <property type="entry name" value="PH domain-like"/>
    <property type="match status" value="1"/>
</dbReference>
<dbReference type="SUPFAM" id="SSF50044">
    <property type="entry name" value="SH3-domain"/>
    <property type="match status" value="1"/>
</dbReference>
<dbReference type="PROSITE" id="PS50003">
    <property type="entry name" value="PH_DOMAIN"/>
    <property type="match status" value="1"/>
</dbReference>
<dbReference type="PROSITE" id="PS50002">
    <property type="entry name" value="SH3"/>
    <property type="match status" value="1"/>
</dbReference>
<organism>
    <name type="scientific">Xenopus laevis</name>
    <name type="common">African clawed frog</name>
    <dbReference type="NCBI Taxonomy" id="8355"/>
    <lineage>
        <taxon>Eukaryota</taxon>
        <taxon>Metazoa</taxon>
        <taxon>Chordata</taxon>
        <taxon>Craniata</taxon>
        <taxon>Vertebrata</taxon>
        <taxon>Euteleostomi</taxon>
        <taxon>Amphibia</taxon>
        <taxon>Batrachia</taxon>
        <taxon>Anura</taxon>
        <taxon>Pipoidea</taxon>
        <taxon>Pipidae</taxon>
        <taxon>Xenopodinae</taxon>
        <taxon>Xenopus</taxon>
        <taxon>Xenopus</taxon>
    </lineage>
</organism>
<feature type="chain" id="PRO_0000270185" description="Src kinase-associated phosphoprotein 2-A">
    <location>
        <begin position="1"/>
        <end position="330"/>
    </location>
</feature>
<feature type="domain" description="PH" evidence="2">
    <location>
        <begin position="105"/>
        <end position="208"/>
    </location>
</feature>
<feature type="domain" description="SH3" evidence="3">
    <location>
        <begin position="268"/>
        <end position="329"/>
    </location>
</feature>
<feature type="region of interest" description="Disordered" evidence="4">
    <location>
        <begin position="53"/>
        <end position="77"/>
    </location>
</feature>
<feature type="region of interest" description="Disordered" evidence="4">
    <location>
        <begin position="228"/>
        <end position="261"/>
    </location>
</feature>
<feature type="compositionally biased region" description="Polar residues" evidence="4">
    <location>
        <begin position="247"/>
        <end position="261"/>
    </location>
</feature>
<protein>
    <recommendedName>
        <fullName>Src kinase-associated phosphoprotein 2-A</fullName>
    </recommendedName>
</protein>
<keyword id="KW-0075">B-cell activation</keyword>
<keyword id="KW-0963">Cytoplasm</keyword>
<keyword id="KW-0597">Phosphoprotein</keyword>
<keyword id="KW-1185">Reference proteome</keyword>
<keyword id="KW-0728">SH3 domain</keyword>
<sequence>MNPALPEDVKNLLTDLETFILDVLKGETLSKKAKEKKEVLIKRLKDIKHSYPQDFQDKAETDDQEENDGFSLPPDAVSIASDRDKDEELPYDGSFYPSVAAQDLDYLRAGYLEKRRKDHSFFASEWQKRWCVLTNSMFYYYGSDKDKQQKGAFSLDGYRAKMNDTLRKDAKKDCCFEILAPDKRVYQFAASSPKEAEEWINVIMNARGNIPSEDEELYDDVNQEMDASHEEDIYEELPEESEKPVTGSETPKATPVPVNNTSGKENTDYANFYRGLWDCNGDHPDELSFKYGDTIYILSKEYNTYGWWVGEMKGTIGLVPKAYIIEMYDI</sequence>
<gene>
    <name type="primary">skap2-a</name>
</gene>
<comment type="function">
    <text evidence="1">May be involved in B-cell and macrophage adhesion processes. May play a role in src signaling pathway (By similarity).</text>
</comment>
<comment type="subcellular location">
    <subcellularLocation>
        <location evidence="1">Cytoplasm</location>
    </subcellularLocation>
</comment>
<comment type="PTM">
    <text evidence="1">Phosphorylated on tyrosines.</text>
</comment>
<comment type="similarity">
    <text evidence="5">Belongs to the SKAP family.</text>
</comment>
<accession>Q5XGP7</accession>